<accession>Q8A9J0</accession>
<feature type="chain" id="PRO_0000170740" description="Altronate oxidoreductase">
    <location>
        <begin position="1"/>
        <end position="479"/>
    </location>
</feature>
<feature type="binding site" evidence="1">
    <location>
        <begin position="18"/>
        <end position="29"/>
    </location>
    <ligand>
        <name>NAD(+)</name>
        <dbReference type="ChEBI" id="CHEBI:57540"/>
    </ligand>
</feature>
<dbReference type="EC" id="1.1.1.58" evidence="1"/>
<dbReference type="EMBL" id="AE015928">
    <property type="protein sequence ID" value="AAO75932.1"/>
    <property type="molecule type" value="Genomic_DNA"/>
</dbReference>
<dbReference type="RefSeq" id="NP_809738.1">
    <property type="nucleotide sequence ID" value="NC_004663.1"/>
</dbReference>
<dbReference type="RefSeq" id="WP_008761512.1">
    <property type="nucleotide sequence ID" value="NC_004663.1"/>
</dbReference>
<dbReference type="SMR" id="Q8A9J0"/>
<dbReference type="FunCoup" id="Q8A9J0">
    <property type="interactions" value="44"/>
</dbReference>
<dbReference type="STRING" id="226186.BT_0825"/>
<dbReference type="PaxDb" id="226186-BT_0825"/>
<dbReference type="EnsemblBacteria" id="AAO75932">
    <property type="protein sequence ID" value="AAO75932"/>
    <property type="gene ID" value="BT_0825"/>
</dbReference>
<dbReference type="GeneID" id="60926795"/>
<dbReference type="KEGG" id="bth:BT_0825"/>
<dbReference type="PATRIC" id="fig|226186.12.peg.842"/>
<dbReference type="eggNOG" id="COG0246">
    <property type="taxonomic scope" value="Bacteria"/>
</dbReference>
<dbReference type="HOGENOM" id="CLU_027324_1_0_10"/>
<dbReference type="InParanoid" id="Q8A9J0"/>
<dbReference type="OrthoDB" id="9768714at2"/>
<dbReference type="UniPathway" id="UPA00246"/>
<dbReference type="Proteomes" id="UP000001414">
    <property type="component" value="Chromosome"/>
</dbReference>
<dbReference type="GO" id="GO:0005829">
    <property type="term" value="C:cytosol"/>
    <property type="evidence" value="ECO:0000318"/>
    <property type="project" value="GO_Central"/>
</dbReference>
<dbReference type="GO" id="GO:0008926">
    <property type="term" value="F:mannitol-1-phosphate 5-dehydrogenase activity"/>
    <property type="evidence" value="ECO:0000318"/>
    <property type="project" value="GO_Central"/>
</dbReference>
<dbReference type="GO" id="GO:0009026">
    <property type="term" value="F:tagaturonate reductase activity"/>
    <property type="evidence" value="ECO:0007669"/>
    <property type="project" value="UniProtKB-UniRule"/>
</dbReference>
<dbReference type="GO" id="GO:0019592">
    <property type="term" value="P:mannitol catabolic process"/>
    <property type="evidence" value="ECO:0000318"/>
    <property type="project" value="GO_Central"/>
</dbReference>
<dbReference type="FunFam" id="1.10.1040.10:FF:000054">
    <property type="entry name" value="Altronate oxidoreductase"/>
    <property type="match status" value="1"/>
</dbReference>
<dbReference type="FunFam" id="3.40.50.720:FF:000343">
    <property type="entry name" value="Altronate oxidoreductase"/>
    <property type="match status" value="1"/>
</dbReference>
<dbReference type="Gene3D" id="1.10.1040.10">
    <property type="entry name" value="N-(1-d-carboxylethyl)-l-norvaline Dehydrogenase, domain 2"/>
    <property type="match status" value="1"/>
</dbReference>
<dbReference type="Gene3D" id="3.40.50.720">
    <property type="entry name" value="NAD(P)-binding Rossmann-like Domain"/>
    <property type="match status" value="1"/>
</dbReference>
<dbReference type="HAMAP" id="MF_00670">
    <property type="entry name" value="Altron_oxidoreduct"/>
    <property type="match status" value="1"/>
</dbReference>
<dbReference type="InterPro" id="IPR008927">
    <property type="entry name" value="6-PGluconate_DH-like_C_sf"/>
</dbReference>
<dbReference type="InterPro" id="IPR013328">
    <property type="entry name" value="6PGD_dom2"/>
</dbReference>
<dbReference type="InterPro" id="IPR023668">
    <property type="entry name" value="Altronate_OxRdtase"/>
</dbReference>
<dbReference type="InterPro" id="IPR013118">
    <property type="entry name" value="Mannitol_DH_C"/>
</dbReference>
<dbReference type="InterPro" id="IPR013131">
    <property type="entry name" value="Mannitol_DH_N"/>
</dbReference>
<dbReference type="InterPro" id="IPR036291">
    <property type="entry name" value="NAD(P)-bd_dom_sf"/>
</dbReference>
<dbReference type="NCBIfam" id="NF002969">
    <property type="entry name" value="PRK03643.1"/>
    <property type="match status" value="1"/>
</dbReference>
<dbReference type="PANTHER" id="PTHR30524:SF0">
    <property type="entry name" value="ALTRONATE OXIDOREDUCTASE-RELATED"/>
    <property type="match status" value="1"/>
</dbReference>
<dbReference type="PANTHER" id="PTHR30524">
    <property type="entry name" value="MANNITOL-1-PHOSPHATE 5-DEHYDROGENASE"/>
    <property type="match status" value="1"/>
</dbReference>
<dbReference type="Pfam" id="PF01232">
    <property type="entry name" value="Mannitol_dh"/>
    <property type="match status" value="1"/>
</dbReference>
<dbReference type="Pfam" id="PF08125">
    <property type="entry name" value="Mannitol_dh_C"/>
    <property type="match status" value="1"/>
</dbReference>
<dbReference type="SUPFAM" id="SSF48179">
    <property type="entry name" value="6-phosphogluconate dehydrogenase C-terminal domain-like"/>
    <property type="match status" value="1"/>
</dbReference>
<dbReference type="SUPFAM" id="SSF51735">
    <property type="entry name" value="NAD(P)-binding Rossmann-fold domains"/>
    <property type="match status" value="1"/>
</dbReference>
<sequence>MKALNKETAPKVQRPERIIQFGEGNFLRAFVDWIIYNMNQKTDFNSSVVVVQPIDKGMVDMLNAQDDLYHVNLQGLDKGEVVNSLTMIDVISRALNPYTQNDEFMKLAEQPEMRFVISNTTEAGIAFDPTCKLEDAPASSYPGKLTQLLYHRFKTFNGDKTKGLIIFPCELIFLNGHKLKETIYQYIDLWNLGNEFKTWFEEACGVYATLVDRIVPGFPRKDIAAIKEKIQYDDNLVVQAEIFHLWVIEAPQEVAKEFPADKAGLNVLFVPSEAPYHERKVTLLNGPHTVLSPVAYLSGVNIVRDACQHEVIGKYIHKVMFDELMETLNLPKEELKKFAEDVLERFNNPFVDHAVTSIMLNSFPKYETRDLPGLKTYLERKGELPKGLVLGLAAIITYYKGGVRADGAEIVPNDAPEIMNLLKELWATGCTKKVTEGVLAAEFIWGEDLNKIPGLAAAVKADLDSIQEKGMLETVKGIL</sequence>
<organism>
    <name type="scientific">Bacteroides thetaiotaomicron (strain ATCC 29148 / DSM 2079 / JCM 5827 / CCUG 10774 / NCTC 10582 / VPI-5482 / E50)</name>
    <dbReference type="NCBI Taxonomy" id="226186"/>
    <lineage>
        <taxon>Bacteria</taxon>
        <taxon>Pseudomonadati</taxon>
        <taxon>Bacteroidota</taxon>
        <taxon>Bacteroidia</taxon>
        <taxon>Bacteroidales</taxon>
        <taxon>Bacteroidaceae</taxon>
        <taxon>Bacteroides</taxon>
    </lineage>
</organism>
<protein>
    <recommendedName>
        <fullName evidence="1">Altronate oxidoreductase</fullName>
        <ecNumber evidence="1">1.1.1.58</ecNumber>
    </recommendedName>
    <alternativeName>
        <fullName evidence="1">Tagaturonate dehydrogenase</fullName>
    </alternativeName>
    <alternativeName>
        <fullName evidence="1">Tagaturonate reductase</fullName>
    </alternativeName>
</protein>
<gene>
    <name evidence="1" type="primary">uxaB</name>
    <name type="ordered locus">BT_0825</name>
</gene>
<keyword id="KW-0520">NAD</keyword>
<keyword id="KW-0560">Oxidoreductase</keyword>
<keyword id="KW-1185">Reference proteome</keyword>
<comment type="catalytic activity">
    <reaction evidence="1">
        <text>D-altronate + NAD(+) = keto-D-tagaturonate + NADH + H(+)</text>
        <dbReference type="Rhea" id="RHEA:17813"/>
        <dbReference type="ChEBI" id="CHEBI:15378"/>
        <dbReference type="ChEBI" id="CHEBI:17360"/>
        <dbReference type="ChEBI" id="CHEBI:17886"/>
        <dbReference type="ChEBI" id="CHEBI:57540"/>
        <dbReference type="ChEBI" id="CHEBI:57945"/>
        <dbReference type="EC" id="1.1.1.58"/>
    </reaction>
</comment>
<comment type="pathway">
    <text evidence="1">Carbohydrate metabolism; pentose and glucuronate interconversion.</text>
</comment>
<comment type="similarity">
    <text evidence="1">Belongs to the mannitol dehydrogenase family. UxaB subfamily.</text>
</comment>
<evidence type="ECO:0000255" key="1">
    <source>
        <dbReference type="HAMAP-Rule" id="MF_00670"/>
    </source>
</evidence>
<name>UXAB_BACTN</name>
<reference key="1">
    <citation type="journal article" date="2003" name="Science">
        <title>A genomic view of the human-Bacteroides thetaiotaomicron symbiosis.</title>
        <authorList>
            <person name="Xu J."/>
            <person name="Bjursell M.K."/>
            <person name="Himrod J."/>
            <person name="Deng S."/>
            <person name="Carmichael L.K."/>
            <person name="Chiang H.C."/>
            <person name="Hooper L.V."/>
            <person name="Gordon J.I."/>
        </authorList>
    </citation>
    <scope>NUCLEOTIDE SEQUENCE [LARGE SCALE GENOMIC DNA]</scope>
    <source>
        <strain>ATCC 29148 / DSM 2079 / JCM 5827 / CCUG 10774 / NCTC 10582 / VPI-5482 / E50</strain>
    </source>
</reference>
<proteinExistence type="inferred from homology"/>